<evidence type="ECO:0000305" key="1"/>
<feature type="chain" id="PRO_0000185127" description="Carbamate kinase">
    <location>
        <begin position="1"/>
        <end position="314"/>
    </location>
</feature>
<name>ARCC_LATSK</name>
<dbReference type="EC" id="2.7.2.2"/>
<dbReference type="EMBL" id="AJ001330">
    <property type="protein sequence ID" value="CAA04684.1"/>
    <property type="molecule type" value="Genomic_DNA"/>
</dbReference>
<dbReference type="PIR" id="T46743">
    <property type="entry name" value="T46743"/>
</dbReference>
<dbReference type="SMR" id="O53090"/>
<dbReference type="UniPathway" id="UPA00996">
    <property type="reaction ID" value="UER00366"/>
</dbReference>
<dbReference type="GO" id="GO:0005829">
    <property type="term" value="C:cytosol"/>
    <property type="evidence" value="ECO:0007669"/>
    <property type="project" value="TreeGrafter"/>
</dbReference>
<dbReference type="GO" id="GO:0005524">
    <property type="term" value="F:ATP binding"/>
    <property type="evidence" value="ECO:0007669"/>
    <property type="project" value="UniProtKB-KW"/>
</dbReference>
<dbReference type="GO" id="GO:0008804">
    <property type="term" value="F:carbamate kinase activity"/>
    <property type="evidence" value="ECO:0007669"/>
    <property type="project" value="UniProtKB-EC"/>
</dbReference>
<dbReference type="GO" id="GO:0019546">
    <property type="term" value="P:arginine deiminase pathway"/>
    <property type="evidence" value="ECO:0007669"/>
    <property type="project" value="TreeGrafter"/>
</dbReference>
<dbReference type="CDD" id="cd04235">
    <property type="entry name" value="AAK_CK"/>
    <property type="match status" value="1"/>
</dbReference>
<dbReference type="FunFam" id="3.40.1160.10:FF:000007">
    <property type="entry name" value="Carbamate kinase"/>
    <property type="match status" value="1"/>
</dbReference>
<dbReference type="Gene3D" id="3.40.1160.10">
    <property type="entry name" value="Acetylglutamate kinase-like"/>
    <property type="match status" value="1"/>
</dbReference>
<dbReference type="InterPro" id="IPR036393">
    <property type="entry name" value="AceGlu_kinase-like_sf"/>
</dbReference>
<dbReference type="InterPro" id="IPR001048">
    <property type="entry name" value="Asp/Glu/Uridylate_kinase"/>
</dbReference>
<dbReference type="InterPro" id="IPR003964">
    <property type="entry name" value="Carb_kinase"/>
</dbReference>
<dbReference type="NCBIfam" id="TIGR00746">
    <property type="entry name" value="arcC"/>
    <property type="match status" value="1"/>
</dbReference>
<dbReference type="NCBIfam" id="NF009007">
    <property type="entry name" value="PRK12352.1"/>
    <property type="match status" value="1"/>
</dbReference>
<dbReference type="PANTHER" id="PTHR30409">
    <property type="entry name" value="CARBAMATE KINASE"/>
    <property type="match status" value="1"/>
</dbReference>
<dbReference type="PANTHER" id="PTHR30409:SF1">
    <property type="entry name" value="CARBAMATE KINASE-RELATED"/>
    <property type="match status" value="1"/>
</dbReference>
<dbReference type="Pfam" id="PF00696">
    <property type="entry name" value="AA_kinase"/>
    <property type="match status" value="1"/>
</dbReference>
<dbReference type="PIRSF" id="PIRSF000723">
    <property type="entry name" value="Carbamate_kin"/>
    <property type="match status" value="1"/>
</dbReference>
<dbReference type="PRINTS" id="PR01469">
    <property type="entry name" value="CARBMTKINASE"/>
</dbReference>
<dbReference type="SUPFAM" id="SSF53633">
    <property type="entry name" value="Carbamate kinase-like"/>
    <property type="match status" value="1"/>
</dbReference>
<reference key="1">
    <citation type="journal article" date="1998" name="J. Bacteriol.">
        <title>Structural and functional analysis of the gene cluster encoding the enzymes of the arginine deiminase pathway of Lactobacillus sakei.</title>
        <authorList>
            <person name="Zuniga M."/>
            <person name="Champomier-Verges M.-C."/>
            <person name="Zagorec M."/>
            <person name="Perez-Martinez G."/>
        </authorList>
    </citation>
    <scope>NUCLEOTIDE SEQUENCE [GENOMIC DNA]</scope>
</reference>
<organism>
    <name type="scientific">Latilactobacillus sakei</name>
    <name type="common">Lactobacillus sakei</name>
    <dbReference type="NCBI Taxonomy" id="1599"/>
    <lineage>
        <taxon>Bacteria</taxon>
        <taxon>Bacillati</taxon>
        <taxon>Bacillota</taxon>
        <taxon>Bacilli</taxon>
        <taxon>Lactobacillales</taxon>
        <taxon>Lactobacillaceae</taxon>
        <taxon>Latilactobacillus</taxon>
    </lineage>
</organism>
<proteinExistence type="inferred from homology"/>
<comment type="catalytic activity">
    <reaction>
        <text>hydrogencarbonate + NH4(+) + ATP = carbamoyl phosphate + ADP + H2O + H(+)</text>
        <dbReference type="Rhea" id="RHEA:10152"/>
        <dbReference type="ChEBI" id="CHEBI:15377"/>
        <dbReference type="ChEBI" id="CHEBI:15378"/>
        <dbReference type="ChEBI" id="CHEBI:17544"/>
        <dbReference type="ChEBI" id="CHEBI:28938"/>
        <dbReference type="ChEBI" id="CHEBI:30616"/>
        <dbReference type="ChEBI" id="CHEBI:58228"/>
        <dbReference type="ChEBI" id="CHEBI:456216"/>
        <dbReference type="EC" id="2.7.2.2"/>
    </reaction>
</comment>
<comment type="pathway">
    <text>Metabolic intermediate metabolism; carbamoyl phosphate degradation; CO(2) and NH(3) from carbamoyl phosphate: step 1/1.</text>
</comment>
<comment type="subcellular location">
    <subcellularLocation>
        <location evidence="1">Cytoplasm</location>
    </subcellularLocation>
</comment>
<comment type="similarity">
    <text evidence="1">Belongs to the carbamate kinase family.</text>
</comment>
<accession>O53090</accession>
<sequence>MTKRKIVVALGGNAILSTDASANAQIKAVKETVKQLVAFVKQGDQLIISHGNGPQVGNLLIQQAASDSEKTPAMPLDTVGAMSQGEIGYWMQNAFNEVLAEEGLALDVATIVTQTIVDAKDEAFQNPTKPIGPFYSEAEAKKQQSINPEAHFVEDAGRGWRRVVPSPRPIGIQEAPVIQKLVEGNVITISAGGGGVPVAKEGNKLRGVEAVIDKDFASEKLAELVGADMLIILTAVDNVYVNFNKPDQKKLTNVSVAELEDYIKDDQFAKGSMLPKIQTAIEYVNNRPDSKAIITSLDNVKNLLAHDAGTIITK</sequence>
<keyword id="KW-0056">Arginine metabolism</keyword>
<keyword id="KW-0067">ATP-binding</keyword>
<keyword id="KW-0963">Cytoplasm</keyword>
<keyword id="KW-0418">Kinase</keyword>
<keyword id="KW-0547">Nucleotide-binding</keyword>
<keyword id="KW-0808">Transferase</keyword>
<gene>
    <name type="primary">arcC</name>
</gene>
<protein>
    <recommendedName>
        <fullName>Carbamate kinase</fullName>
        <ecNumber>2.7.2.2</ecNumber>
    </recommendedName>
</protein>